<proteinExistence type="inferred from homology"/>
<organism>
    <name type="scientific">Stenotrophomonas maltophilia (strain R551-3)</name>
    <dbReference type="NCBI Taxonomy" id="391008"/>
    <lineage>
        <taxon>Bacteria</taxon>
        <taxon>Pseudomonadati</taxon>
        <taxon>Pseudomonadota</taxon>
        <taxon>Gammaproteobacteria</taxon>
        <taxon>Lysobacterales</taxon>
        <taxon>Lysobacteraceae</taxon>
        <taxon>Stenotrophomonas</taxon>
        <taxon>Stenotrophomonas maltophilia group</taxon>
    </lineage>
</organism>
<comment type="function">
    <text evidence="1">Channel that opens in response to stretch forces in the membrane lipid bilayer. May participate in the regulation of osmotic pressure changes within the cell.</text>
</comment>
<comment type="subunit">
    <text evidence="1">Homopentamer.</text>
</comment>
<comment type="subcellular location">
    <subcellularLocation>
        <location evidence="1">Cell inner membrane</location>
        <topology evidence="1">Multi-pass membrane protein</topology>
    </subcellularLocation>
</comment>
<comment type="similarity">
    <text evidence="1">Belongs to the MscL family.</text>
</comment>
<accession>B4STT2</accession>
<evidence type="ECO:0000255" key="1">
    <source>
        <dbReference type="HAMAP-Rule" id="MF_00115"/>
    </source>
</evidence>
<feature type="chain" id="PRO_1000094928" description="Large-conductance mechanosensitive channel">
    <location>
        <begin position="1"/>
        <end position="134"/>
    </location>
</feature>
<feature type="transmembrane region" description="Helical" evidence="1">
    <location>
        <begin position="16"/>
        <end position="36"/>
    </location>
</feature>
<feature type="transmembrane region" description="Helical" evidence="1">
    <location>
        <begin position="84"/>
        <end position="104"/>
    </location>
</feature>
<protein>
    <recommendedName>
        <fullName evidence="1">Large-conductance mechanosensitive channel</fullName>
    </recommendedName>
</protein>
<sequence>MGMLTEFKEFAMRGNVIDLAVGVVIGAAFGKIVTALVEKIIMPPLGMLIGKVDFSQLAWTLSPASIGADGKEIPAVVIGYGDFINTLIQFVIVAFAIFLVIKVINRLSRKQDAAPAAPAEEVVLLREIRDSLKK</sequence>
<dbReference type="EMBL" id="CP001111">
    <property type="protein sequence ID" value="ACF52895.1"/>
    <property type="molecule type" value="Genomic_DNA"/>
</dbReference>
<dbReference type="RefSeq" id="WP_012511949.1">
    <property type="nucleotide sequence ID" value="NC_011071.1"/>
</dbReference>
<dbReference type="SMR" id="B4STT2"/>
<dbReference type="STRING" id="391008.Smal_3196"/>
<dbReference type="KEGG" id="smt:Smal_3196"/>
<dbReference type="eggNOG" id="COG1970">
    <property type="taxonomic scope" value="Bacteria"/>
</dbReference>
<dbReference type="HOGENOM" id="CLU_095787_0_0_6"/>
<dbReference type="OrthoDB" id="9810350at2"/>
<dbReference type="Proteomes" id="UP000001867">
    <property type="component" value="Chromosome"/>
</dbReference>
<dbReference type="GO" id="GO:0005886">
    <property type="term" value="C:plasma membrane"/>
    <property type="evidence" value="ECO:0007669"/>
    <property type="project" value="UniProtKB-SubCell"/>
</dbReference>
<dbReference type="GO" id="GO:0008381">
    <property type="term" value="F:mechanosensitive monoatomic ion channel activity"/>
    <property type="evidence" value="ECO:0007669"/>
    <property type="project" value="UniProtKB-UniRule"/>
</dbReference>
<dbReference type="FunFam" id="1.10.1200.120:FF:000001">
    <property type="entry name" value="Large-conductance mechanosensitive channel"/>
    <property type="match status" value="1"/>
</dbReference>
<dbReference type="Gene3D" id="1.10.1200.120">
    <property type="entry name" value="Large-conductance mechanosensitive channel, MscL, domain 1"/>
    <property type="match status" value="1"/>
</dbReference>
<dbReference type="HAMAP" id="MF_00115">
    <property type="entry name" value="MscL"/>
    <property type="match status" value="1"/>
</dbReference>
<dbReference type="InterPro" id="IPR019823">
    <property type="entry name" value="Mechanosensitive_channel_CS"/>
</dbReference>
<dbReference type="InterPro" id="IPR001185">
    <property type="entry name" value="MS_channel"/>
</dbReference>
<dbReference type="InterPro" id="IPR037673">
    <property type="entry name" value="MSC/AndL"/>
</dbReference>
<dbReference type="InterPro" id="IPR036019">
    <property type="entry name" value="MscL_channel"/>
</dbReference>
<dbReference type="NCBIfam" id="TIGR00220">
    <property type="entry name" value="mscL"/>
    <property type="match status" value="1"/>
</dbReference>
<dbReference type="NCBIfam" id="NF001843">
    <property type="entry name" value="PRK00567.1-4"/>
    <property type="match status" value="1"/>
</dbReference>
<dbReference type="NCBIfam" id="NF010557">
    <property type="entry name" value="PRK13952.1"/>
    <property type="match status" value="1"/>
</dbReference>
<dbReference type="PANTHER" id="PTHR30266:SF2">
    <property type="entry name" value="LARGE-CONDUCTANCE MECHANOSENSITIVE CHANNEL"/>
    <property type="match status" value="1"/>
</dbReference>
<dbReference type="PANTHER" id="PTHR30266">
    <property type="entry name" value="MECHANOSENSITIVE CHANNEL MSCL"/>
    <property type="match status" value="1"/>
</dbReference>
<dbReference type="Pfam" id="PF01741">
    <property type="entry name" value="MscL"/>
    <property type="match status" value="1"/>
</dbReference>
<dbReference type="PRINTS" id="PR01264">
    <property type="entry name" value="MECHCHANNEL"/>
</dbReference>
<dbReference type="SUPFAM" id="SSF81330">
    <property type="entry name" value="Gated mechanosensitive channel"/>
    <property type="match status" value="1"/>
</dbReference>
<dbReference type="PROSITE" id="PS01327">
    <property type="entry name" value="MSCL"/>
    <property type="match status" value="1"/>
</dbReference>
<gene>
    <name evidence="1" type="primary">mscL</name>
    <name type="ordered locus">Smal_3196</name>
</gene>
<reference key="1">
    <citation type="submission" date="2008-06" db="EMBL/GenBank/DDBJ databases">
        <title>Complete sequence of Stenotrophomonas maltophilia R551-3.</title>
        <authorList>
            <consortium name="US DOE Joint Genome Institute"/>
            <person name="Lucas S."/>
            <person name="Copeland A."/>
            <person name="Lapidus A."/>
            <person name="Glavina del Rio T."/>
            <person name="Dalin E."/>
            <person name="Tice H."/>
            <person name="Pitluck S."/>
            <person name="Chain P."/>
            <person name="Malfatti S."/>
            <person name="Shin M."/>
            <person name="Vergez L."/>
            <person name="Lang D."/>
            <person name="Schmutz J."/>
            <person name="Larimer F."/>
            <person name="Land M."/>
            <person name="Hauser L."/>
            <person name="Kyrpides N."/>
            <person name="Mikhailova N."/>
            <person name="Taghavi S."/>
            <person name="Monchy S."/>
            <person name="Newman L."/>
            <person name="Vangronsveld J."/>
            <person name="van der Lelie D."/>
            <person name="Richardson P."/>
        </authorList>
    </citation>
    <scope>NUCLEOTIDE SEQUENCE [LARGE SCALE GENOMIC DNA]</scope>
    <source>
        <strain>R551-3</strain>
    </source>
</reference>
<keyword id="KW-0997">Cell inner membrane</keyword>
<keyword id="KW-1003">Cell membrane</keyword>
<keyword id="KW-0407">Ion channel</keyword>
<keyword id="KW-0406">Ion transport</keyword>
<keyword id="KW-0472">Membrane</keyword>
<keyword id="KW-0812">Transmembrane</keyword>
<keyword id="KW-1133">Transmembrane helix</keyword>
<keyword id="KW-0813">Transport</keyword>
<name>MSCL_STRM5</name>